<feature type="chain" id="PRO_0000410564" description="Uncharacterized protein 030R">
    <location>
        <begin position="1"/>
        <end position="50"/>
    </location>
</feature>
<sequence>MSLYLLLGLKILRYLKMVIVLRCHSAFLLSVKFLREKRRLKMYLGIMLGF</sequence>
<organismHost>
    <name type="scientific">Dryophytes versicolor</name>
    <name type="common">chameleon treefrog</name>
    <dbReference type="NCBI Taxonomy" id="30343"/>
</organismHost>
<organismHost>
    <name type="scientific">Lithobates pipiens</name>
    <name type="common">Northern leopard frog</name>
    <name type="synonym">Rana pipiens</name>
    <dbReference type="NCBI Taxonomy" id="8404"/>
</organismHost>
<organismHost>
    <name type="scientific">Lithobates sylvaticus</name>
    <name type="common">Wood frog</name>
    <name type="synonym">Rana sylvatica</name>
    <dbReference type="NCBI Taxonomy" id="45438"/>
</organismHost>
<organismHost>
    <name type="scientific">Notophthalmus viridescens</name>
    <name type="common">Eastern newt</name>
    <name type="synonym">Triturus viridescens</name>
    <dbReference type="NCBI Taxonomy" id="8316"/>
</organismHost>
<organism>
    <name type="scientific">Frog virus 3 (isolate Goorha)</name>
    <name type="common">FV-3</name>
    <dbReference type="NCBI Taxonomy" id="654924"/>
    <lineage>
        <taxon>Viruses</taxon>
        <taxon>Varidnaviria</taxon>
        <taxon>Bamfordvirae</taxon>
        <taxon>Nucleocytoviricota</taxon>
        <taxon>Megaviricetes</taxon>
        <taxon>Pimascovirales</taxon>
        <taxon>Iridoviridae</taxon>
        <taxon>Alphairidovirinae</taxon>
        <taxon>Ranavirus</taxon>
        <taxon>Frog virus 3</taxon>
    </lineage>
</organism>
<keyword id="KW-1185">Reference proteome</keyword>
<gene>
    <name type="ORF">FV3-030L</name>
</gene>
<protein>
    <recommendedName>
        <fullName>Uncharacterized protein 030R</fullName>
    </recommendedName>
</protein>
<proteinExistence type="predicted"/>
<reference key="1">
    <citation type="journal article" date="2004" name="Virology">
        <title>Comparative genomic analyses of frog virus 3, type species of the genus Ranavirus (family Iridoviridae).</title>
        <authorList>
            <person name="Tan W.G."/>
            <person name="Barkman T.J."/>
            <person name="Gregory Chinchar V."/>
            <person name="Essani K."/>
        </authorList>
    </citation>
    <scope>NUCLEOTIDE SEQUENCE [LARGE SCALE GENOMIC DNA]</scope>
</reference>
<dbReference type="EMBL" id="AY548484">
    <property type="protein sequence ID" value="AAT09689.1"/>
    <property type="molecule type" value="Genomic_DNA"/>
</dbReference>
<dbReference type="RefSeq" id="YP_031608.1">
    <property type="nucleotide sequence ID" value="NC_005946.1"/>
</dbReference>
<dbReference type="KEGG" id="vg:2947750"/>
<dbReference type="Proteomes" id="UP000008770">
    <property type="component" value="Segment"/>
</dbReference>
<accession>Q6GZU6</accession>
<name>030R_FRG3G</name>